<proteinExistence type="inferred from homology"/>
<reference key="1">
    <citation type="journal article" date="2012" name="Nat. Genet.">
        <title>Lifestyle transitions in plant pathogenic Colletotrichum fungi deciphered by genome and transcriptome analyses.</title>
        <authorList>
            <person name="O'Connell R.J."/>
            <person name="Thon M.R."/>
            <person name="Hacquard S."/>
            <person name="Amyotte S.G."/>
            <person name="Kleemann J."/>
            <person name="Torres M.F."/>
            <person name="Damm U."/>
            <person name="Buiate E.A."/>
            <person name="Epstein L."/>
            <person name="Alkan N."/>
            <person name="Altmueller J."/>
            <person name="Alvarado-Balderrama L."/>
            <person name="Bauser C.A."/>
            <person name="Becker C."/>
            <person name="Birren B.W."/>
            <person name="Chen Z."/>
            <person name="Choi J."/>
            <person name="Crouch J.A."/>
            <person name="Duvick J.P."/>
            <person name="Farman M.A."/>
            <person name="Gan P."/>
            <person name="Heiman D."/>
            <person name="Henrissat B."/>
            <person name="Howard R.J."/>
            <person name="Kabbage M."/>
            <person name="Koch C."/>
            <person name="Kracher B."/>
            <person name="Kubo Y."/>
            <person name="Law A.D."/>
            <person name="Lebrun M.-H."/>
            <person name="Lee Y.-H."/>
            <person name="Miyara I."/>
            <person name="Moore N."/>
            <person name="Neumann U."/>
            <person name="Nordstroem K."/>
            <person name="Panaccione D.G."/>
            <person name="Panstruga R."/>
            <person name="Place M."/>
            <person name="Proctor R.H."/>
            <person name="Prusky D."/>
            <person name="Rech G."/>
            <person name="Reinhardt R."/>
            <person name="Rollins J.A."/>
            <person name="Rounsley S."/>
            <person name="Schardl C.L."/>
            <person name="Schwartz D.C."/>
            <person name="Shenoy N."/>
            <person name="Shirasu K."/>
            <person name="Sikhakolli U.R."/>
            <person name="Stueber K."/>
            <person name="Sukno S.A."/>
            <person name="Sweigard J.A."/>
            <person name="Takano Y."/>
            <person name="Takahara H."/>
            <person name="Trail F."/>
            <person name="van der Does H.C."/>
            <person name="Voll L.M."/>
            <person name="Will I."/>
            <person name="Young S."/>
            <person name="Zeng Q."/>
            <person name="Zhang J."/>
            <person name="Zhou S."/>
            <person name="Dickman M.B."/>
            <person name="Schulze-Lefert P."/>
            <person name="Ver Loren van Themaat E."/>
            <person name="Ma L.-J."/>
            <person name="Vaillancourt L.J."/>
        </authorList>
    </citation>
    <scope>NUCLEOTIDE SEQUENCE [LARGE SCALE GENOMIC DNA]</scope>
    <source>
        <strain>M1.001 / M2 / FGSC 10212</strain>
    </source>
</reference>
<dbReference type="EC" id="3.4.24.-"/>
<dbReference type="EMBL" id="GG697353">
    <property type="protein sequence ID" value="EFQ31142.1"/>
    <property type="molecule type" value="Genomic_DNA"/>
</dbReference>
<dbReference type="RefSeq" id="XP_008095162.1">
    <property type="nucleotide sequence ID" value="XM_008096971.1"/>
</dbReference>
<dbReference type="SMR" id="E3QJV4"/>
<dbReference type="STRING" id="645133.E3QJV4"/>
<dbReference type="EnsemblFungi" id="EFQ31142">
    <property type="protein sequence ID" value="EFQ31142"/>
    <property type="gene ID" value="GLRG_06286"/>
</dbReference>
<dbReference type="GeneID" id="24411651"/>
<dbReference type="VEuPathDB" id="FungiDB:GLRG_06286"/>
<dbReference type="eggNOG" id="ENOG502RYKG">
    <property type="taxonomic scope" value="Eukaryota"/>
</dbReference>
<dbReference type="HOGENOM" id="CLU_048726_0_0_1"/>
<dbReference type="OrthoDB" id="536211at2759"/>
<dbReference type="Proteomes" id="UP000008782">
    <property type="component" value="Unassembled WGS sequence"/>
</dbReference>
<dbReference type="GO" id="GO:0005576">
    <property type="term" value="C:extracellular region"/>
    <property type="evidence" value="ECO:0007669"/>
    <property type="project" value="UniProtKB-SubCell"/>
</dbReference>
<dbReference type="GO" id="GO:0046872">
    <property type="term" value="F:metal ion binding"/>
    <property type="evidence" value="ECO:0007669"/>
    <property type="project" value="UniProtKB-KW"/>
</dbReference>
<dbReference type="GO" id="GO:0008237">
    <property type="term" value="F:metallopeptidase activity"/>
    <property type="evidence" value="ECO:0007669"/>
    <property type="project" value="UniProtKB-KW"/>
</dbReference>
<dbReference type="GO" id="GO:0006508">
    <property type="term" value="P:proteolysis"/>
    <property type="evidence" value="ECO:0007669"/>
    <property type="project" value="UniProtKB-KW"/>
</dbReference>
<dbReference type="CDD" id="cd04275">
    <property type="entry name" value="ZnMc_pappalysin_like"/>
    <property type="match status" value="1"/>
</dbReference>
<dbReference type="Gene3D" id="3.40.390.10">
    <property type="entry name" value="Collagenase (Catalytic Domain)"/>
    <property type="match status" value="1"/>
</dbReference>
<dbReference type="InterPro" id="IPR024079">
    <property type="entry name" value="MetalloPept_cat_dom_sf"/>
</dbReference>
<dbReference type="InterPro" id="IPR008754">
    <property type="entry name" value="Peptidase_M43"/>
</dbReference>
<dbReference type="PANTHER" id="PTHR47466">
    <property type="match status" value="1"/>
</dbReference>
<dbReference type="PANTHER" id="PTHR47466:SF1">
    <property type="entry name" value="METALLOPROTEASE MEP1 (AFU_ORTHOLOGUE AFUA_1G07730)-RELATED"/>
    <property type="match status" value="1"/>
</dbReference>
<dbReference type="Pfam" id="PF05572">
    <property type="entry name" value="Peptidase_M43"/>
    <property type="match status" value="1"/>
</dbReference>
<dbReference type="SUPFAM" id="SSF55486">
    <property type="entry name" value="Metalloproteases ('zincins'), catalytic domain"/>
    <property type="match status" value="1"/>
</dbReference>
<dbReference type="PROSITE" id="PS00142">
    <property type="entry name" value="ZINC_PROTEASE"/>
    <property type="match status" value="1"/>
</dbReference>
<keyword id="KW-1015">Disulfide bond</keyword>
<keyword id="KW-0325">Glycoprotein</keyword>
<keyword id="KW-0378">Hydrolase</keyword>
<keyword id="KW-0479">Metal-binding</keyword>
<keyword id="KW-0482">Metalloprotease</keyword>
<keyword id="KW-0645">Protease</keyword>
<keyword id="KW-1185">Reference proteome</keyword>
<keyword id="KW-0964">Secreted</keyword>
<keyword id="KW-0732">Signal</keyword>
<keyword id="KW-0862">Zinc</keyword>
<protein>
    <recommendedName>
        <fullName>Extracellular metalloprotease GLRG_06286</fullName>
        <ecNumber>3.4.24.-</ecNumber>
    </recommendedName>
</protein>
<name>MEP1_COLGM</name>
<gene>
    <name type="ORF">GLRG_06286</name>
</gene>
<organism>
    <name type="scientific">Colletotrichum graminicola (strain M1.001 / M2 / FGSC 10212)</name>
    <name type="common">Maize anthracnose fungus</name>
    <name type="synonym">Glomerella graminicola</name>
    <dbReference type="NCBI Taxonomy" id="645133"/>
    <lineage>
        <taxon>Eukaryota</taxon>
        <taxon>Fungi</taxon>
        <taxon>Dikarya</taxon>
        <taxon>Ascomycota</taxon>
        <taxon>Pezizomycotina</taxon>
        <taxon>Sordariomycetes</taxon>
        <taxon>Hypocreomycetidae</taxon>
        <taxon>Glomerellales</taxon>
        <taxon>Glomerellaceae</taxon>
        <taxon>Colletotrichum</taxon>
        <taxon>Colletotrichum graminicola species complex</taxon>
    </lineage>
</organism>
<evidence type="ECO:0000250" key="1"/>
<evidence type="ECO:0000255" key="2"/>
<evidence type="ECO:0000255" key="3">
    <source>
        <dbReference type="PROSITE-ProRule" id="PRU10095"/>
    </source>
</evidence>
<evidence type="ECO:0000256" key="4">
    <source>
        <dbReference type="SAM" id="MobiDB-lite"/>
    </source>
</evidence>
<evidence type="ECO:0000305" key="5"/>
<accession>E3QJV4</accession>
<sequence length="280" mass="30109">MQVTFTLVAALAGMASAAVAGERGSFGCATHEPTLEHIEISKKLAEEEATNATLFGLAAAATITVPTYFHVVASSQTVANGYITDKMLSDQLAVMNEDFAPHGISFNLVQTTRTINPTWARDGDELAMKRSLRKGDYGALNLYFLRDIGGAFGYCYFPTTASPGSASYIRDGCTILSSTVPGGSSTNYNLGRTVTHEVGHWFGLYHTFQGGCTGSGDSIADTPAQSSPSSGCPVGRDSCPNQPGVDPIHNYMDYSIDSCYEEFTPNQQTRMYSFFNQYRA</sequence>
<comment type="function">
    <text evidence="1">Secreted metalloproteinase that allows assimilation of proteinaceous substrates.</text>
</comment>
<comment type="subcellular location">
    <subcellularLocation>
        <location evidence="1">Secreted</location>
    </subcellularLocation>
</comment>
<comment type="similarity">
    <text evidence="5">Belongs to the peptidase M43B family.</text>
</comment>
<feature type="signal peptide" evidence="2">
    <location>
        <begin position="1"/>
        <end position="17"/>
    </location>
</feature>
<feature type="chain" id="PRO_0000407201" description="Extracellular metalloprotease GLRG_06286">
    <location>
        <begin position="18"/>
        <end position="280"/>
    </location>
</feature>
<feature type="region of interest" description="Disordered" evidence="4">
    <location>
        <begin position="217"/>
        <end position="236"/>
    </location>
</feature>
<feature type="active site" evidence="3">
    <location>
        <position position="197"/>
    </location>
</feature>
<feature type="binding site" evidence="3">
    <location>
        <position position="196"/>
    </location>
    <ligand>
        <name>Zn(2+)</name>
        <dbReference type="ChEBI" id="CHEBI:29105"/>
        <note>catalytic</note>
    </ligand>
</feature>
<feature type="binding site" evidence="3">
    <location>
        <position position="200"/>
    </location>
    <ligand>
        <name>Zn(2+)</name>
        <dbReference type="ChEBI" id="CHEBI:29105"/>
        <note>catalytic</note>
    </ligand>
</feature>
<feature type="glycosylation site" description="N-linked (GlcNAc...) asparagine" evidence="2">
    <location>
        <position position="51"/>
    </location>
</feature>
<feature type="disulfide bond" evidence="1">
    <location>
        <begin position="232"/>
        <end position="259"/>
    </location>
</feature>